<evidence type="ECO:0000250" key="1"/>
<evidence type="ECO:0000250" key="2">
    <source>
        <dbReference type="UniProtKB" id="P62737"/>
    </source>
</evidence>
<evidence type="ECO:0000250" key="3">
    <source>
        <dbReference type="UniProtKB" id="P68137"/>
    </source>
</evidence>
<evidence type="ECO:0000305" key="4"/>
<organism>
    <name type="scientific">Limulus polyphemus</name>
    <name type="common">Atlantic horseshoe crab</name>
    <dbReference type="NCBI Taxonomy" id="6850"/>
    <lineage>
        <taxon>Eukaryota</taxon>
        <taxon>Metazoa</taxon>
        <taxon>Ecdysozoa</taxon>
        <taxon>Arthropoda</taxon>
        <taxon>Chelicerata</taxon>
        <taxon>Merostomata</taxon>
        <taxon>Xiphosura</taxon>
        <taxon>Limulidae</taxon>
        <taxon>Limulus</taxon>
    </lineage>
</organism>
<sequence>MCDEDVAALVVDNGSGMCKAGFAGDDAPRAVFPSIVGRPRHQGVMVGMGQKDSYVGDEAQSKRGILTLKYPIEHGIVTNWDDMEKIWHHTFYNELRVAPEEHPVLLTEAPLNPKANREKMTQIMFETFNTPAMYVAIQAVLSLYASGRTTGIVLDSGDGVSHTVPIYEGYALPHAILRLDLAGRDLTDYLMKILTERGYSFTTTAEREIVRDIKEKLCYVALDFEHEMTTAASSSSLEKSYELPDGQVITIGNERFRCPEAMFQPSFLGMEACGIHETTFNSIMKCDVDIRKDLYANTVLSGGSTMFPGIADRMQKEIGALAPSTMKIKIIAPPERKYSVWIGGSILASLSTFQQMWISKQEYDESGPSIVHRKCF</sequence>
<keyword id="KW-0007">Acetylation</keyword>
<keyword id="KW-0067">ATP-binding</keyword>
<keyword id="KW-0963">Cytoplasm</keyword>
<keyword id="KW-0206">Cytoskeleton</keyword>
<keyword id="KW-0378">Hydrolase</keyword>
<keyword id="KW-0547">Nucleotide-binding</keyword>
<keyword id="KW-0558">Oxidation</keyword>
<feature type="propeptide" id="PRO_0000000690" description="Removed in mature form" evidence="1">
    <location>
        <begin position="1"/>
        <end position="2"/>
    </location>
</feature>
<feature type="chain" id="PRO_0000000691" description="Actin, acrosomal process isoform">
    <location>
        <begin position="3"/>
        <end position="376"/>
    </location>
</feature>
<feature type="modified residue" description="N-acetylaspartate" evidence="1">
    <location>
        <position position="3"/>
    </location>
</feature>
<feature type="modified residue" description="Methionine sulfoxide" evidence="2">
    <location>
        <position position="45"/>
    </location>
</feature>
<feature type="modified residue" description="Methionine sulfoxide" evidence="2">
    <location>
        <position position="48"/>
    </location>
</feature>
<reference key="1">
    <citation type="journal article" date="1995" name="J. Cell Biol.">
        <title>Sequence and domain organization of scruin, an actin-cross-linking protein in the acrosomal process of Limulus sperm.</title>
        <authorList>
            <person name="Way M."/>
            <person name="Sanders M."/>
            <person name="Garcia C."/>
            <person name="Sakai J."/>
            <person name="Matsudaira P."/>
        </authorList>
    </citation>
    <scope>NUCLEOTIDE SEQUENCE [MRNA]</scope>
    <source>
        <tissue>Testis</tissue>
    </source>
</reference>
<name>ACTA_LIMPO</name>
<dbReference type="EC" id="3.6.4.-" evidence="3"/>
<dbReference type="EMBL" id="Z38131">
    <property type="protein sequence ID" value="CAA86291.1"/>
    <property type="molecule type" value="mRNA"/>
</dbReference>
<dbReference type="PIR" id="S49481">
    <property type="entry name" value="S49481"/>
</dbReference>
<dbReference type="RefSeq" id="NP_001301052.1">
    <property type="nucleotide sequence ID" value="NM_001314123.1"/>
</dbReference>
<dbReference type="SMR" id="P41339"/>
<dbReference type="EnsemblMetazoa" id="NM_001314123.1">
    <property type="protein sequence ID" value="NP_001301052.1"/>
    <property type="gene ID" value="LOC106476934"/>
</dbReference>
<dbReference type="GeneID" id="106476934"/>
<dbReference type="KEGG" id="lpol:106476934"/>
<dbReference type="OrthoDB" id="6407219at2759"/>
<dbReference type="Proteomes" id="UP000694941">
    <property type="component" value="Unplaced"/>
</dbReference>
<dbReference type="GO" id="GO:0005737">
    <property type="term" value="C:cytoplasm"/>
    <property type="evidence" value="ECO:0007669"/>
    <property type="project" value="UniProtKB-KW"/>
</dbReference>
<dbReference type="GO" id="GO:0005856">
    <property type="term" value="C:cytoskeleton"/>
    <property type="evidence" value="ECO:0007669"/>
    <property type="project" value="UniProtKB-SubCell"/>
</dbReference>
<dbReference type="GO" id="GO:0005524">
    <property type="term" value="F:ATP binding"/>
    <property type="evidence" value="ECO:0007669"/>
    <property type="project" value="UniProtKB-KW"/>
</dbReference>
<dbReference type="GO" id="GO:0016787">
    <property type="term" value="F:hydrolase activity"/>
    <property type="evidence" value="ECO:0007669"/>
    <property type="project" value="UniProtKB-KW"/>
</dbReference>
<dbReference type="CDD" id="cd10224">
    <property type="entry name" value="ASKHA_NBD_actin"/>
    <property type="match status" value="1"/>
</dbReference>
<dbReference type="FunFam" id="3.30.420.40:FF:000131">
    <property type="entry name" value="Actin, alpha skeletal muscle"/>
    <property type="match status" value="1"/>
</dbReference>
<dbReference type="FunFam" id="3.30.420.40:FF:000291">
    <property type="entry name" value="Actin, alpha skeletal muscle"/>
    <property type="match status" value="1"/>
</dbReference>
<dbReference type="FunFam" id="3.90.640.10:FF:000047">
    <property type="entry name" value="Actin, alpha skeletal muscle"/>
    <property type="match status" value="1"/>
</dbReference>
<dbReference type="FunFam" id="3.30.420.40:FF:000058">
    <property type="entry name" value="Putative actin-related protein 5"/>
    <property type="match status" value="1"/>
</dbReference>
<dbReference type="Gene3D" id="3.30.420.40">
    <property type="match status" value="2"/>
</dbReference>
<dbReference type="Gene3D" id="3.90.640.10">
    <property type="entry name" value="Actin, Chain A, domain 4"/>
    <property type="match status" value="1"/>
</dbReference>
<dbReference type="InterPro" id="IPR004000">
    <property type="entry name" value="Actin"/>
</dbReference>
<dbReference type="InterPro" id="IPR020902">
    <property type="entry name" value="Actin/actin-like_CS"/>
</dbReference>
<dbReference type="InterPro" id="IPR004001">
    <property type="entry name" value="Actin_CS"/>
</dbReference>
<dbReference type="InterPro" id="IPR043129">
    <property type="entry name" value="ATPase_NBD"/>
</dbReference>
<dbReference type="PANTHER" id="PTHR11937">
    <property type="entry name" value="ACTIN"/>
    <property type="match status" value="1"/>
</dbReference>
<dbReference type="Pfam" id="PF00022">
    <property type="entry name" value="Actin"/>
    <property type="match status" value="1"/>
</dbReference>
<dbReference type="PRINTS" id="PR00190">
    <property type="entry name" value="ACTIN"/>
</dbReference>
<dbReference type="SMART" id="SM00268">
    <property type="entry name" value="ACTIN"/>
    <property type="match status" value="1"/>
</dbReference>
<dbReference type="SUPFAM" id="SSF53067">
    <property type="entry name" value="Actin-like ATPase domain"/>
    <property type="match status" value="2"/>
</dbReference>
<dbReference type="PROSITE" id="PS00406">
    <property type="entry name" value="ACTINS_1"/>
    <property type="match status" value="1"/>
</dbReference>
<dbReference type="PROSITE" id="PS00432">
    <property type="entry name" value="ACTINS_2"/>
    <property type="match status" value="1"/>
</dbReference>
<dbReference type="PROSITE" id="PS01132">
    <property type="entry name" value="ACTINS_ACT_LIKE"/>
    <property type="match status" value="1"/>
</dbReference>
<protein>
    <recommendedName>
        <fullName>Actin, acrosomal process isoform</fullName>
        <ecNumber evidence="3">3.6.4.-</ecNumber>
    </recommendedName>
    <alternativeName>
        <fullName>Actin-5</fullName>
    </alternativeName>
</protein>
<proteinExistence type="evidence at transcript level"/>
<accession>P41339</accession>
<comment type="function">
    <text>Actins are highly conserved proteins that are involved in various types of cell motility and are ubiquitously expressed in all eukaryotic cells.</text>
</comment>
<comment type="catalytic activity">
    <reaction evidence="3">
        <text>ATP + H2O = ADP + phosphate + H(+)</text>
        <dbReference type="Rhea" id="RHEA:13065"/>
        <dbReference type="ChEBI" id="CHEBI:15377"/>
        <dbReference type="ChEBI" id="CHEBI:15378"/>
        <dbReference type="ChEBI" id="CHEBI:30616"/>
        <dbReference type="ChEBI" id="CHEBI:43474"/>
        <dbReference type="ChEBI" id="CHEBI:456216"/>
    </reaction>
</comment>
<comment type="subcellular location">
    <subcellularLocation>
        <location>Cytoplasm</location>
        <location>Cytoskeleton</location>
    </subcellularLocation>
</comment>
<comment type="PTM">
    <text evidence="2">Oxidation of Met-45 and Met-48 to form methionine sulfoxide promotes actin filament depolymerization. Methionine sulfoxide is produced stereospecifically, but it is not known whether the (S)-S-oxide or the (R)-S-oxide is produced.</text>
</comment>
<comment type="similarity">
    <text evidence="4">Belongs to the actin family.</text>
</comment>